<comment type="catalytic activity">
    <reaction>
        <text>thymidine + ATP = dTMP + ADP + H(+)</text>
        <dbReference type="Rhea" id="RHEA:19129"/>
        <dbReference type="ChEBI" id="CHEBI:15378"/>
        <dbReference type="ChEBI" id="CHEBI:17748"/>
        <dbReference type="ChEBI" id="CHEBI:30616"/>
        <dbReference type="ChEBI" id="CHEBI:63528"/>
        <dbReference type="ChEBI" id="CHEBI:456216"/>
        <dbReference type="EC" id="2.7.1.21"/>
    </reaction>
</comment>
<comment type="similarity">
    <text evidence="3">Belongs to the thymidine kinase family.</text>
</comment>
<evidence type="ECO:0000250" key="1"/>
<evidence type="ECO:0000255" key="2"/>
<evidence type="ECO:0000305" key="3"/>
<organism>
    <name type="scientific">Myxoma virus (strain Lausanne)</name>
    <name type="common">MYXV</name>
    <dbReference type="NCBI Taxonomy" id="31530"/>
    <lineage>
        <taxon>Viruses</taxon>
        <taxon>Varidnaviria</taxon>
        <taxon>Bamfordvirae</taxon>
        <taxon>Nucleocytoviricota</taxon>
        <taxon>Pokkesviricetes</taxon>
        <taxon>Chitovirales</taxon>
        <taxon>Poxviridae</taxon>
        <taxon>Chordopoxvirinae</taxon>
        <taxon>Leporipoxvirus</taxon>
        <taxon>Myxoma virus</taxon>
    </lineage>
</organism>
<reference key="1">
    <citation type="journal article" date="1999" name="Virology">
        <title>The complete DNA sequence of myxoma virus.</title>
        <authorList>
            <person name="Cameron C."/>
            <person name="Hota-Mitchell S."/>
            <person name="Chen L."/>
            <person name="Barrett J.W."/>
            <person name="Cao J.-X."/>
            <person name="Macaulay C."/>
            <person name="Willer D.O."/>
            <person name="Evans D.H."/>
            <person name="McFadden G."/>
        </authorList>
    </citation>
    <scope>NUCLEOTIDE SEQUENCE [LARGE SCALE GENOMIC DNA]</scope>
</reference>
<sequence length="178" mass="19945">MAMYGGQIHLIIGPMFAGKSTELIRLVKRYQIARYKCLVVKYEKDARYGNGVRTHDNTCISAVPTASLDDVESISEHVEVIGIDEGQFFPNIVSFCERMANAGKVLIVAALDGTFQRKPFTNICELIPLAENVTKLNAVCMYCYKDASFSKRLGNETEIEIIGGSDKYKSVCRKCYFF</sequence>
<keyword id="KW-0067">ATP-binding</keyword>
<keyword id="KW-0237">DNA synthesis</keyword>
<keyword id="KW-0418">Kinase</keyword>
<keyword id="KW-0479">Metal-binding</keyword>
<keyword id="KW-0547">Nucleotide-binding</keyword>
<keyword id="KW-1185">Reference proteome</keyword>
<keyword id="KW-0808">Transferase</keyword>
<keyword id="KW-0862">Zinc</keyword>
<protein>
    <recommendedName>
        <fullName>Thymidine kinase</fullName>
        <ecNumber>2.7.1.21</ecNumber>
    </recommendedName>
</protein>
<gene>
    <name type="primary">TK</name>
    <name type="ordered locus">m061R</name>
</gene>
<organismHost>
    <name type="scientific">Oryctolagus cuniculus</name>
    <name type="common">Rabbit</name>
    <dbReference type="NCBI Taxonomy" id="9986"/>
</organismHost>
<proteinExistence type="inferred from homology"/>
<dbReference type="EC" id="2.7.1.21"/>
<dbReference type="EMBL" id="AF170726">
    <property type="protein sequence ID" value="AAF14949.1"/>
    <property type="molecule type" value="Genomic_DNA"/>
</dbReference>
<dbReference type="RefSeq" id="NP_051775.1">
    <property type="nucleotide sequence ID" value="NC_001132.2"/>
</dbReference>
<dbReference type="SMR" id="Q9Q8N6"/>
<dbReference type="GeneID" id="932181"/>
<dbReference type="KEGG" id="vg:932181"/>
<dbReference type="Proteomes" id="UP000000867">
    <property type="component" value="Segment"/>
</dbReference>
<dbReference type="GO" id="GO:0005524">
    <property type="term" value="F:ATP binding"/>
    <property type="evidence" value="ECO:0007669"/>
    <property type="project" value="UniProtKB-KW"/>
</dbReference>
<dbReference type="GO" id="GO:0046872">
    <property type="term" value="F:metal ion binding"/>
    <property type="evidence" value="ECO:0007669"/>
    <property type="project" value="UniProtKB-KW"/>
</dbReference>
<dbReference type="GO" id="GO:0004797">
    <property type="term" value="F:thymidine kinase activity"/>
    <property type="evidence" value="ECO:0007669"/>
    <property type="project" value="UniProtKB-EC"/>
</dbReference>
<dbReference type="GO" id="GO:0071897">
    <property type="term" value="P:DNA biosynthetic process"/>
    <property type="evidence" value="ECO:0007669"/>
    <property type="project" value="UniProtKB-KW"/>
</dbReference>
<dbReference type="GO" id="GO:0046104">
    <property type="term" value="P:thymidine metabolic process"/>
    <property type="evidence" value="ECO:0007669"/>
    <property type="project" value="TreeGrafter"/>
</dbReference>
<dbReference type="FunFam" id="3.30.60.20:FF:000028">
    <property type="entry name" value="Thymidine kinase"/>
    <property type="match status" value="1"/>
</dbReference>
<dbReference type="FunFam" id="3.40.50.300:FF:001270">
    <property type="entry name" value="Thymidine kinase"/>
    <property type="match status" value="1"/>
</dbReference>
<dbReference type="Gene3D" id="3.30.60.20">
    <property type="match status" value="1"/>
</dbReference>
<dbReference type="Gene3D" id="3.40.50.300">
    <property type="entry name" value="P-loop containing nucleotide triphosphate hydrolases"/>
    <property type="match status" value="1"/>
</dbReference>
<dbReference type="InterPro" id="IPR027417">
    <property type="entry name" value="P-loop_NTPase"/>
</dbReference>
<dbReference type="InterPro" id="IPR001267">
    <property type="entry name" value="Thymidine_kinase"/>
</dbReference>
<dbReference type="InterPro" id="IPR020633">
    <property type="entry name" value="Thymidine_kinase_CS"/>
</dbReference>
<dbReference type="PANTHER" id="PTHR11441">
    <property type="entry name" value="THYMIDINE KINASE"/>
    <property type="match status" value="1"/>
</dbReference>
<dbReference type="PANTHER" id="PTHR11441:SF0">
    <property type="entry name" value="THYMIDINE KINASE, CYTOSOLIC"/>
    <property type="match status" value="1"/>
</dbReference>
<dbReference type="Pfam" id="PF00265">
    <property type="entry name" value="TK"/>
    <property type="match status" value="1"/>
</dbReference>
<dbReference type="PIRSF" id="PIRSF035805">
    <property type="entry name" value="TK_cell"/>
    <property type="match status" value="1"/>
</dbReference>
<dbReference type="SUPFAM" id="SSF57716">
    <property type="entry name" value="Glucocorticoid receptor-like (DNA-binding domain)"/>
    <property type="match status" value="1"/>
</dbReference>
<dbReference type="SUPFAM" id="SSF52540">
    <property type="entry name" value="P-loop containing nucleoside triphosphate hydrolases"/>
    <property type="match status" value="1"/>
</dbReference>
<dbReference type="PROSITE" id="PS00603">
    <property type="entry name" value="TK_CELLULAR_TYPE"/>
    <property type="match status" value="1"/>
</dbReference>
<accession>Q9Q8N6</accession>
<name>KITH_MYXVL</name>
<feature type="chain" id="PRO_0000174932" description="Thymidine kinase">
    <location>
        <begin position="1"/>
        <end position="178"/>
    </location>
</feature>
<feature type="active site" description="Proton acceptor" evidence="2">
    <location>
        <position position="85"/>
    </location>
</feature>
<feature type="binding site" evidence="1">
    <location>
        <begin position="13"/>
        <end position="20"/>
    </location>
    <ligand>
        <name>ATP</name>
        <dbReference type="ChEBI" id="CHEBI:30616"/>
    </ligand>
</feature>
<feature type="binding site" evidence="1">
    <location>
        <position position="115"/>
    </location>
    <ligand>
        <name>substrate</name>
    </ligand>
</feature>
<feature type="binding site" evidence="1">
    <location>
        <position position="140"/>
    </location>
    <ligand>
        <name>Zn(2+)</name>
        <dbReference type="ChEBI" id="CHEBI:29105"/>
    </ligand>
</feature>
<feature type="binding site" evidence="1">
    <location>
        <position position="143"/>
    </location>
    <ligand>
        <name>Zn(2+)</name>
        <dbReference type="ChEBI" id="CHEBI:29105"/>
    </ligand>
</feature>
<feature type="binding site" evidence="1">
    <location>
        <begin position="159"/>
        <end position="163"/>
    </location>
    <ligand>
        <name>substrate</name>
    </ligand>
</feature>
<feature type="binding site" evidence="1">
    <location>
        <position position="172"/>
    </location>
    <ligand>
        <name>Zn(2+)</name>
        <dbReference type="ChEBI" id="CHEBI:29105"/>
    </ligand>
</feature>
<feature type="binding site" evidence="1">
    <location>
        <position position="175"/>
    </location>
    <ligand>
        <name>Zn(2+)</name>
        <dbReference type="ChEBI" id="CHEBI:29105"/>
    </ligand>
</feature>